<proteinExistence type="evidence at transcript level"/>
<keyword id="KW-0106">Calcium</keyword>
<keyword id="KW-1015">Disulfide bond</keyword>
<keyword id="KW-0256">Endoplasmic reticulum</keyword>
<keyword id="KW-0326">Glycosidase</keyword>
<keyword id="KW-0378">Hydrolase</keyword>
<keyword id="KW-0472">Membrane</keyword>
<keyword id="KW-0479">Metal-binding</keyword>
<keyword id="KW-0597">Phosphoprotein</keyword>
<keyword id="KW-1185">Reference proteome</keyword>
<keyword id="KW-0735">Signal-anchor</keyword>
<keyword id="KW-0812">Transmembrane</keyword>
<keyword id="KW-1133">Transmembrane helix</keyword>
<organism>
    <name type="scientific">Rattus norvegicus</name>
    <name type="common">Rat</name>
    <dbReference type="NCBI Taxonomy" id="10116"/>
    <lineage>
        <taxon>Eukaryota</taxon>
        <taxon>Metazoa</taxon>
        <taxon>Chordata</taxon>
        <taxon>Craniata</taxon>
        <taxon>Vertebrata</taxon>
        <taxon>Euteleostomi</taxon>
        <taxon>Mammalia</taxon>
        <taxon>Eutheria</taxon>
        <taxon>Euarchontoglires</taxon>
        <taxon>Glires</taxon>
        <taxon>Rodentia</taxon>
        <taxon>Myomorpha</taxon>
        <taxon>Muroidea</taxon>
        <taxon>Muridae</taxon>
        <taxon>Murinae</taxon>
        <taxon>Rattus</taxon>
    </lineage>
</organism>
<reference key="1">
    <citation type="journal article" date="2004" name="Genome Res.">
        <title>The status, quality, and expansion of the NIH full-length cDNA project: the Mammalian Gene Collection (MGC).</title>
        <authorList>
            <consortium name="The MGC Project Team"/>
        </authorList>
    </citation>
    <scope>NUCLEOTIDE SEQUENCE [LARGE SCALE MRNA]</scope>
    <source>
        <tissue>Brain</tissue>
    </source>
</reference>
<name>MA1B1_RAT</name>
<accession>B2GUY0</accession>
<evidence type="ECO:0000250" key="1"/>
<evidence type="ECO:0000250" key="2">
    <source>
        <dbReference type="UniProtKB" id="A2AJ15"/>
    </source>
</evidence>
<evidence type="ECO:0000250" key="3">
    <source>
        <dbReference type="UniProtKB" id="P31723"/>
    </source>
</evidence>
<evidence type="ECO:0000250" key="4">
    <source>
        <dbReference type="UniProtKB" id="P32906"/>
    </source>
</evidence>
<evidence type="ECO:0000250" key="5">
    <source>
        <dbReference type="UniProtKB" id="P45700"/>
    </source>
</evidence>
<evidence type="ECO:0000255" key="6"/>
<evidence type="ECO:0000256" key="7">
    <source>
        <dbReference type="SAM" id="MobiDB-lite"/>
    </source>
</evidence>
<evidence type="ECO:0000305" key="8"/>
<gene>
    <name type="primary">Man1b1</name>
</gene>
<sequence>MYPPPPAPAPHRDFISVTLSLGESYDNSKSRRRRSCWRKWKQLSRLQRNVILFVLGFLILCGFLYSLQVSDQWKALSGSRAEVEKMKLEVLPVLPAPQKESAEPEGFADILSQKRQRHLRRGPPHLQIRPPNTVSKDGMQDDAKEREAALGKAQQEENTQRTVISWRGAVIEPEQATEPPSKRAEASIKPLFLASRIWKEPAPPNERQKGVIEAFLHAWKGYQKFAWGHDELKPVSKTFSEWFGLGLTLIDALDTMWILGLKQEFKEARKWVSENLDFQKNVDVNLFESTIRILGGLLSAYHLSGDSLFLSKAEDFGNRLMPAFTTPSKIPYSDVNIGTGFAHSPQWTSDSTVAEVTSIQLEFRELSRLTGIKKFQEAVEEVTKHIHSLSGKKDGLVPMFINTNSGLFTHPGVFTLGARADSYYEYLLKQWIQGGKKETQLLEDYVRAIEGIKAHLLRQSQPRKLTFVGELAHGRFSAKMDHLVCFLPGTLALGVHHGLPADHMDLARALMETCYQMNQQMETGLSPEIAHFNMYPRADHKDVEVKPADRHNLLRPETVESLFYLYRVTKDRKYQDWGWEILQSFNKYTRVPSGGYSSINNVQNSHKPEPRDKMESFFVGETLKYLYLLFSDDLELLGLDTCVFNTEAHPLPIWSPA</sequence>
<feature type="chain" id="PRO_0000396623" description="Endoplasmic reticulum mannosyl-oligosaccharide 1,2-alpha-mannosidase">
    <location>
        <begin position="1"/>
        <end position="657"/>
    </location>
</feature>
<feature type="topological domain" description="Cytoplasmic" evidence="6">
    <location>
        <begin position="1"/>
        <end position="49"/>
    </location>
</feature>
<feature type="transmembrane region" description="Helical" evidence="6">
    <location>
        <begin position="50"/>
        <end position="70"/>
    </location>
</feature>
<feature type="topological domain" description="Lumenal" evidence="6">
    <location>
        <begin position="71"/>
        <end position="657"/>
    </location>
</feature>
<feature type="region of interest" description="Disordered" evidence="7">
    <location>
        <begin position="118"/>
        <end position="157"/>
    </location>
</feature>
<feature type="compositionally biased region" description="Basic and acidic residues" evidence="7">
    <location>
        <begin position="138"/>
        <end position="157"/>
    </location>
</feature>
<feature type="active site" description="Proton donor" evidence="1">
    <location>
        <position position="288"/>
    </location>
</feature>
<feature type="active site" evidence="1">
    <location>
        <position position="421"/>
    </location>
</feature>
<feature type="active site" description="Proton donor" evidence="3">
    <location>
        <position position="528"/>
    </location>
</feature>
<feature type="active site" evidence="1">
    <location>
        <position position="557"/>
    </location>
</feature>
<feature type="binding site" evidence="4">
    <location>
        <position position="646"/>
    </location>
    <ligand>
        <name>Ca(2+)</name>
        <dbReference type="ChEBI" id="CHEBI:29108"/>
    </ligand>
</feature>
<feature type="modified residue" description="Phosphoserine" evidence="2">
    <location>
        <position position="101"/>
    </location>
</feature>
<feature type="disulfide bond" evidence="4">
    <location>
        <begin position="485"/>
        <end position="514"/>
    </location>
</feature>
<dbReference type="EC" id="3.2.1.113" evidence="4"/>
<dbReference type="EMBL" id="BC166449">
    <property type="protein sequence ID" value="AAI66449.1"/>
    <property type="molecule type" value="mRNA"/>
</dbReference>
<dbReference type="RefSeq" id="NP_001102666.1">
    <property type="nucleotide sequence ID" value="NM_001109196.1"/>
</dbReference>
<dbReference type="SMR" id="B2GUY0"/>
<dbReference type="FunCoup" id="B2GUY0">
    <property type="interactions" value="4045"/>
</dbReference>
<dbReference type="IntAct" id="B2GUY0">
    <property type="interactions" value="1"/>
</dbReference>
<dbReference type="STRING" id="10116.ENSRNOP00000016846"/>
<dbReference type="CAZy" id="GH47">
    <property type="family name" value="Glycoside Hydrolase Family 47"/>
</dbReference>
<dbReference type="PhosphoSitePlus" id="B2GUY0"/>
<dbReference type="jPOST" id="B2GUY0"/>
<dbReference type="PaxDb" id="10116-ENSRNOP00000016846"/>
<dbReference type="PeptideAtlas" id="B2GUY0"/>
<dbReference type="GeneID" id="499751"/>
<dbReference type="KEGG" id="rno:499751"/>
<dbReference type="UCSC" id="RGD:1563595">
    <property type="organism name" value="rat"/>
</dbReference>
<dbReference type="AGR" id="RGD:1563595"/>
<dbReference type="CTD" id="11253"/>
<dbReference type="RGD" id="1563595">
    <property type="gene designation" value="Man1b1"/>
</dbReference>
<dbReference type="VEuPathDB" id="HostDB:ENSRNOG00000012559"/>
<dbReference type="eggNOG" id="KOG2431">
    <property type="taxonomic scope" value="Eukaryota"/>
</dbReference>
<dbReference type="HOGENOM" id="CLU_003818_3_3_1"/>
<dbReference type="InParanoid" id="B2GUY0"/>
<dbReference type="OrthoDB" id="8118055at2759"/>
<dbReference type="PhylomeDB" id="B2GUY0"/>
<dbReference type="TreeFam" id="TF354274"/>
<dbReference type="UniPathway" id="UPA00378"/>
<dbReference type="PRO" id="PR:B2GUY0"/>
<dbReference type="Proteomes" id="UP000002494">
    <property type="component" value="Chromosome 3"/>
</dbReference>
<dbReference type="Bgee" id="ENSRNOG00000012559">
    <property type="expression patterns" value="Expressed in pancreas and 19 other cell types or tissues"/>
</dbReference>
<dbReference type="GO" id="GO:0031410">
    <property type="term" value="C:cytoplasmic vesicle"/>
    <property type="evidence" value="ECO:0000266"/>
    <property type="project" value="RGD"/>
</dbReference>
<dbReference type="GO" id="GO:0005783">
    <property type="term" value="C:endoplasmic reticulum"/>
    <property type="evidence" value="ECO:0000266"/>
    <property type="project" value="RGD"/>
</dbReference>
<dbReference type="GO" id="GO:0005789">
    <property type="term" value="C:endoplasmic reticulum membrane"/>
    <property type="evidence" value="ECO:0007669"/>
    <property type="project" value="UniProtKB-SubCell"/>
</dbReference>
<dbReference type="GO" id="GO:0044322">
    <property type="term" value="C:endoplasmic reticulum quality control compartment"/>
    <property type="evidence" value="ECO:0000266"/>
    <property type="project" value="RGD"/>
</dbReference>
<dbReference type="GO" id="GO:0016020">
    <property type="term" value="C:membrane"/>
    <property type="evidence" value="ECO:0000266"/>
    <property type="project" value="RGD"/>
</dbReference>
<dbReference type="GO" id="GO:0005509">
    <property type="term" value="F:calcium ion binding"/>
    <property type="evidence" value="ECO:0007669"/>
    <property type="project" value="InterPro"/>
</dbReference>
<dbReference type="GO" id="GO:0004571">
    <property type="term" value="F:mannosyl-oligosaccharide 1,2-alpha-mannosidase activity"/>
    <property type="evidence" value="ECO:0000266"/>
    <property type="project" value="RGD"/>
</dbReference>
<dbReference type="GO" id="GO:0005975">
    <property type="term" value="P:carbohydrate metabolic process"/>
    <property type="evidence" value="ECO:0007669"/>
    <property type="project" value="InterPro"/>
</dbReference>
<dbReference type="GO" id="GO:0036503">
    <property type="term" value="P:ERAD pathway"/>
    <property type="evidence" value="ECO:0000266"/>
    <property type="project" value="RGD"/>
</dbReference>
<dbReference type="GO" id="GO:0006058">
    <property type="term" value="P:mannoprotein catabolic process"/>
    <property type="evidence" value="ECO:0000266"/>
    <property type="project" value="RGD"/>
</dbReference>
<dbReference type="GO" id="GO:0006486">
    <property type="term" value="P:protein glycosylation"/>
    <property type="evidence" value="ECO:0007669"/>
    <property type="project" value="UniProtKB-UniPathway"/>
</dbReference>
<dbReference type="FunFam" id="1.50.10.10:FF:000010">
    <property type="entry name" value="alpha-1,2-Mannosidase"/>
    <property type="match status" value="1"/>
</dbReference>
<dbReference type="Gene3D" id="1.50.10.10">
    <property type="match status" value="1"/>
</dbReference>
<dbReference type="InterPro" id="IPR012341">
    <property type="entry name" value="6hp_glycosidase-like_sf"/>
</dbReference>
<dbReference type="InterPro" id="IPR001382">
    <property type="entry name" value="Glyco_hydro_47"/>
</dbReference>
<dbReference type="InterPro" id="IPR050749">
    <property type="entry name" value="Glycosyl_Hydrolase_47"/>
</dbReference>
<dbReference type="InterPro" id="IPR036026">
    <property type="entry name" value="Seven-hairpin_glycosidases"/>
</dbReference>
<dbReference type="PANTHER" id="PTHR11742:SF55">
    <property type="entry name" value="ENDOPLASMIC RETICULUM MANNOSYL-OLIGOSACCHARIDE 1,2-ALPHA-MANNOSIDASE"/>
    <property type="match status" value="1"/>
</dbReference>
<dbReference type="PANTHER" id="PTHR11742">
    <property type="entry name" value="MANNOSYL-OLIGOSACCHARIDE ALPHA-1,2-MANNOSIDASE-RELATED"/>
    <property type="match status" value="1"/>
</dbReference>
<dbReference type="Pfam" id="PF01532">
    <property type="entry name" value="Glyco_hydro_47"/>
    <property type="match status" value="1"/>
</dbReference>
<dbReference type="PRINTS" id="PR00747">
    <property type="entry name" value="GLYHDRLASE47"/>
</dbReference>
<dbReference type="SUPFAM" id="SSF48225">
    <property type="entry name" value="Seven-hairpin glycosidases"/>
    <property type="match status" value="1"/>
</dbReference>
<comment type="function">
    <text evidence="1">Involved in glycoprotein quality control targeting of misfolded glycoproteins for degradation. It primarily trims a single alpha-1,2-linked mannose residue from Man(9)GlcNAc(2) to produce Man(8)GlcNAc(2), but at high enzyme concentrations, as found in the ER quality control compartment (ERQC), it further trims the carbohydrates to Man(5-6)GlcNAc(2) (By similarity).</text>
</comment>
<comment type="catalytic activity">
    <reaction evidence="4">
        <text>N(4)-(alpha-D-Man-(1-&gt;2)-alpha-D-Man-(1-&gt;2)-alpha-D-Man-(1-&gt;3)-[alpha-D-Man-(1-&gt;2)-alpha-D-Man-(1-&gt;3)-[alpha-D-Man-(1-&gt;2)-alpha-D-Man-(1-&gt;6)]-alpha-D-Man-(1-&gt;6)]-beta-D-Man-(1-&gt;4)-beta-D-GlcNAc-(1-&gt;4)-beta-D-GlcNAc)-L-asparaginyl-[protein] (N-glucan mannose isomer 9A1,2,3B1,2,3) + 4 H2O = N(4)-(alpha-D-Man-(1-&gt;3)-[alpha-D-Man-(1-&gt;3)-[alpha-D-Man-(1-&gt;6)]-alpha-D-Man-(1-&gt;6)]-beta-D-Man-(1-&gt;4)-beta-D-GlcNAc-(1-&gt;4)-beta-D-GlcNAc)-L-asparaginyl-[protein] (N-glucan mannose isomer 5A1,2) + 4 beta-D-mannose</text>
        <dbReference type="Rhea" id="RHEA:56008"/>
        <dbReference type="Rhea" id="RHEA-COMP:14356"/>
        <dbReference type="Rhea" id="RHEA-COMP:14367"/>
        <dbReference type="ChEBI" id="CHEBI:15377"/>
        <dbReference type="ChEBI" id="CHEBI:28563"/>
        <dbReference type="ChEBI" id="CHEBI:59087"/>
        <dbReference type="ChEBI" id="CHEBI:139493"/>
        <dbReference type="EC" id="3.2.1.113"/>
    </reaction>
</comment>
<comment type="catalytic activity">
    <reaction evidence="4">
        <text>N(4)-(alpha-D-Man-(1-&gt;2)-alpha-D-Man-(1-&gt;2)-alpha-D-Man-(1-&gt;3)-[alpha-D-Man-(1-&gt;3)-[alpha-D-Man-(1-&gt;2)-alpha-D-Man-(1-&gt;6)]-alpha-D-Man-(1-&gt;6)]-beta-D-Man-(1-&gt;4)-beta-D-GlcNAc-(1-&gt;4)-beta-D-GlcNAc)-L-asparaginyl-[protein] (N-glucan mannose isomer 8A1,2,3B1,3) + 3 H2O = N(4)-(alpha-D-Man-(1-&gt;3)-[alpha-D-Man-(1-&gt;3)-[alpha-D-Man-(1-&gt;6)]-alpha-D-Man-(1-&gt;6)]-beta-D-Man-(1-&gt;4)-beta-D-GlcNAc-(1-&gt;4)-beta-D-GlcNAc)-L-asparaginyl-[protein] (N-glucan mannose isomer 5A1,2) + 3 beta-D-mannose</text>
        <dbReference type="Rhea" id="RHEA:56028"/>
        <dbReference type="Rhea" id="RHEA-COMP:14358"/>
        <dbReference type="Rhea" id="RHEA-COMP:14367"/>
        <dbReference type="ChEBI" id="CHEBI:15377"/>
        <dbReference type="ChEBI" id="CHEBI:28563"/>
        <dbReference type="ChEBI" id="CHEBI:59087"/>
        <dbReference type="ChEBI" id="CHEBI:60628"/>
        <dbReference type="EC" id="3.2.1.113"/>
    </reaction>
</comment>
<comment type="cofactor">
    <cofactor evidence="5">
        <name>Ca(2+)</name>
        <dbReference type="ChEBI" id="CHEBI:29108"/>
    </cofactor>
</comment>
<comment type="pathway">
    <text evidence="4">Protein modification; protein glycosylation.</text>
</comment>
<comment type="subcellular location">
    <subcellularLocation>
        <location>Endoplasmic reticulum membrane</location>
        <topology>Single-pass type II membrane protein</topology>
    </subcellularLocation>
</comment>
<comment type="similarity">
    <text evidence="8">Belongs to the glycosyl hydrolase 47 family.</text>
</comment>
<protein>
    <recommendedName>
        <fullName>Endoplasmic reticulum mannosyl-oligosaccharide 1,2-alpha-mannosidase</fullName>
        <ecNumber evidence="4">3.2.1.113</ecNumber>
    </recommendedName>
    <alternativeName>
        <fullName>ER alpha-1,2-mannosidase</fullName>
    </alternativeName>
    <alternativeName>
        <fullName>ER mannosidase 1</fullName>
        <shortName>ERMan1</shortName>
    </alternativeName>
    <alternativeName>
        <fullName>Mannosidase alpha class 1B member 1</fullName>
    </alternativeName>
</protein>